<keyword id="KW-1015">Disulfide bond</keyword>
<keyword id="KW-0249">Electron transport</keyword>
<keyword id="KW-0676">Redox-active center</keyword>
<keyword id="KW-1185">Reference proteome</keyword>
<keyword id="KW-0813">Transport</keyword>
<reference key="1">
    <citation type="journal article" date="2002" name="Nucleic Acids Res.">
        <title>Genome sequence of Shigella flexneri 2a: insights into pathogenicity through comparison with genomes of Escherichia coli K12 and O157.</title>
        <authorList>
            <person name="Jin Q."/>
            <person name="Yuan Z."/>
            <person name="Xu J."/>
            <person name="Wang Y."/>
            <person name="Shen Y."/>
            <person name="Lu W."/>
            <person name="Wang J."/>
            <person name="Liu H."/>
            <person name="Yang J."/>
            <person name="Yang F."/>
            <person name="Zhang X."/>
            <person name="Zhang J."/>
            <person name="Yang G."/>
            <person name="Wu H."/>
            <person name="Qu D."/>
            <person name="Dong J."/>
            <person name="Sun L."/>
            <person name="Xue Y."/>
            <person name="Zhao A."/>
            <person name="Gao Y."/>
            <person name="Zhu J."/>
            <person name="Kan B."/>
            <person name="Ding K."/>
            <person name="Chen S."/>
            <person name="Cheng H."/>
            <person name="Yao Z."/>
            <person name="He B."/>
            <person name="Chen R."/>
            <person name="Ma D."/>
            <person name="Qiang B."/>
            <person name="Wen Y."/>
            <person name="Hou Y."/>
            <person name="Yu J."/>
        </authorList>
    </citation>
    <scope>NUCLEOTIDE SEQUENCE [LARGE SCALE GENOMIC DNA]</scope>
    <source>
        <strain>301 / Serotype 2a</strain>
    </source>
</reference>
<reference key="2">
    <citation type="journal article" date="2003" name="Infect. Immun.">
        <title>Complete genome sequence and comparative genomics of Shigella flexneri serotype 2a strain 2457T.</title>
        <authorList>
            <person name="Wei J."/>
            <person name="Goldberg M.B."/>
            <person name="Burland V."/>
            <person name="Venkatesan M.M."/>
            <person name="Deng W."/>
            <person name="Fournier G."/>
            <person name="Mayhew G.F."/>
            <person name="Plunkett G. III"/>
            <person name="Rose D.J."/>
            <person name="Darling A."/>
            <person name="Mau B."/>
            <person name="Perna N.T."/>
            <person name="Payne S.M."/>
            <person name="Runyen-Janecky L.J."/>
            <person name="Zhou S."/>
            <person name="Schwartz D.C."/>
            <person name="Blattner F.R."/>
        </authorList>
    </citation>
    <scope>NUCLEOTIDE SEQUENCE [LARGE SCALE GENOMIC DNA]</scope>
    <source>
        <strain>ATCC 700930 / 2457T / Serotype 2a</strain>
    </source>
</reference>
<organism>
    <name type="scientific">Shigella flexneri</name>
    <dbReference type="NCBI Taxonomy" id="623"/>
    <lineage>
        <taxon>Bacteria</taxon>
        <taxon>Pseudomonadati</taxon>
        <taxon>Pseudomonadota</taxon>
        <taxon>Gammaproteobacteria</taxon>
        <taxon>Enterobacterales</taxon>
        <taxon>Enterobacteriaceae</taxon>
        <taxon>Shigella</taxon>
    </lineage>
</organism>
<protein>
    <recommendedName>
        <fullName>Glutaredoxin-like protein NrdH</fullName>
    </recommendedName>
</protein>
<accession>P0AC68</accession>
<accession>Q47414</accession>
<name>NRDH_SHIFL</name>
<gene>
    <name type="primary">nrdH</name>
    <name type="ordered locus">SF2701</name>
    <name type="ordered locus">S2887</name>
</gene>
<comment type="function">
    <text evidence="1">Electron transport system for the ribonucleotide reductase system NrdEF.</text>
</comment>
<comment type="similarity">
    <text evidence="3">Belongs to the glutaredoxin family.</text>
</comment>
<dbReference type="EMBL" id="AE005674">
    <property type="protein sequence ID" value="AAN44194.1"/>
    <property type="molecule type" value="Genomic_DNA"/>
</dbReference>
<dbReference type="EMBL" id="AE014073">
    <property type="protein sequence ID" value="AAP18021.1"/>
    <property type="molecule type" value="Genomic_DNA"/>
</dbReference>
<dbReference type="RefSeq" id="NP_708487.1">
    <property type="nucleotide sequence ID" value="NC_004337.2"/>
</dbReference>
<dbReference type="RefSeq" id="WP_001223227.1">
    <property type="nucleotide sequence ID" value="NZ_WPGW01000014.1"/>
</dbReference>
<dbReference type="SMR" id="P0AC68"/>
<dbReference type="STRING" id="198214.SF2701"/>
<dbReference type="PaxDb" id="198214-SF2701"/>
<dbReference type="GeneID" id="1025701"/>
<dbReference type="GeneID" id="93779337"/>
<dbReference type="KEGG" id="sfl:SF2701"/>
<dbReference type="KEGG" id="sfx:S2887"/>
<dbReference type="PATRIC" id="fig|198214.7.peg.3216"/>
<dbReference type="HOGENOM" id="CLU_026126_9_0_6"/>
<dbReference type="Proteomes" id="UP000001006">
    <property type="component" value="Chromosome"/>
</dbReference>
<dbReference type="Proteomes" id="UP000002673">
    <property type="component" value="Chromosome"/>
</dbReference>
<dbReference type="GO" id="GO:0009055">
    <property type="term" value="F:electron transfer activity"/>
    <property type="evidence" value="ECO:0007669"/>
    <property type="project" value="TreeGrafter"/>
</dbReference>
<dbReference type="GO" id="GO:0045454">
    <property type="term" value="P:cell redox homeostasis"/>
    <property type="evidence" value="ECO:0007669"/>
    <property type="project" value="InterPro"/>
</dbReference>
<dbReference type="CDD" id="cd02976">
    <property type="entry name" value="NrdH"/>
    <property type="match status" value="1"/>
</dbReference>
<dbReference type="FunFam" id="3.40.30.10:FF:000060">
    <property type="entry name" value="Glutaredoxin-like protein nrdH"/>
    <property type="match status" value="1"/>
</dbReference>
<dbReference type="Gene3D" id="3.40.30.10">
    <property type="entry name" value="Glutaredoxin"/>
    <property type="match status" value="1"/>
</dbReference>
<dbReference type="InterPro" id="IPR011909">
    <property type="entry name" value="GlrX_NrdH"/>
</dbReference>
<dbReference type="InterPro" id="IPR002109">
    <property type="entry name" value="Glutaredoxin"/>
</dbReference>
<dbReference type="InterPro" id="IPR051548">
    <property type="entry name" value="Grx-like_ET"/>
</dbReference>
<dbReference type="InterPro" id="IPR036249">
    <property type="entry name" value="Thioredoxin-like_sf"/>
</dbReference>
<dbReference type="NCBIfam" id="TIGR02194">
    <property type="entry name" value="GlrX_NrdH"/>
    <property type="match status" value="1"/>
</dbReference>
<dbReference type="NCBIfam" id="NF007657">
    <property type="entry name" value="PRK10329.1"/>
    <property type="match status" value="1"/>
</dbReference>
<dbReference type="PANTHER" id="PTHR34386">
    <property type="entry name" value="GLUTAREDOXIN"/>
    <property type="match status" value="1"/>
</dbReference>
<dbReference type="PANTHER" id="PTHR34386:SF1">
    <property type="entry name" value="GLUTAREDOXIN-LIKE PROTEIN NRDH"/>
    <property type="match status" value="1"/>
</dbReference>
<dbReference type="Pfam" id="PF00462">
    <property type="entry name" value="Glutaredoxin"/>
    <property type="match status" value="1"/>
</dbReference>
<dbReference type="SUPFAM" id="SSF52833">
    <property type="entry name" value="Thioredoxin-like"/>
    <property type="match status" value="1"/>
</dbReference>
<dbReference type="PROSITE" id="PS51354">
    <property type="entry name" value="GLUTAREDOXIN_2"/>
    <property type="match status" value="1"/>
</dbReference>
<evidence type="ECO:0000250" key="1"/>
<evidence type="ECO:0000255" key="2">
    <source>
        <dbReference type="PROSITE-ProRule" id="PRU00686"/>
    </source>
</evidence>
<evidence type="ECO:0000305" key="3"/>
<proteinExistence type="inferred from homology"/>
<feature type="chain" id="PRO_0000141642" description="Glutaredoxin-like protein NrdH">
    <location>
        <begin position="1"/>
        <end position="81"/>
    </location>
</feature>
<feature type="domain" description="Glutaredoxin" evidence="2">
    <location>
        <begin position="1"/>
        <end position="81"/>
    </location>
</feature>
<feature type="disulfide bond" description="Redox-active" evidence="1">
    <location>
        <begin position="11"/>
        <end position="14"/>
    </location>
</feature>
<sequence length="81" mass="9139">MRITIYTRNDCVQCHATKRAMENRGFDFEMINVDRVPEAAEALRAQGFRQLPVVIAGDLSWSGFRPDMINRLHPAPHAASA</sequence>